<sequence>MPSVKVRENEPFEFALRRFKRTCEKAGVLAETRKREFYEKPTQERKRKAAAAVKRQLRRSSRDVTKRQRLY</sequence>
<keyword id="KW-0687">Ribonucleoprotein</keyword>
<keyword id="KW-0689">Ribosomal protein</keyword>
<gene>
    <name evidence="1" type="primary">rpsU</name>
    <name type="ordered locus">XCV3991</name>
</gene>
<feature type="chain" id="PRO_0000266798" description="Small ribosomal subunit protein bS21">
    <location>
        <begin position="1"/>
        <end position="71"/>
    </location>
</feature>
<feature type="region of interest" description="Disordered" evidence="2">
    <location>
        <begin position="39"/>
        <end position="71"/>
    </location>
</feature>
<feature type="compositionally biased region" description="Basic residues" evidence="2">
    <location>
        <begin position="45"/>
        <end position="59"/>
    </location>
</feature>
<feature type="compositionally biased region" description="Basic and acidic residues" evidence="2">
    <location>
        <begin position="60"/>
        <end position="71"/>
    </location>
</feature>
<organism>
    <name type="scientific">Xanthomonas euvesicatoria pv. vesicatoria (strain 85-10)</name>
    <name type="common">Xanthomonas campestris pv. vesicatoria</name>
    <dbReference type="NCBI Taxonomy" id="316273"/>
    <lineage>
        <taxon>Bacteria</taxon>
        <taxon>Pseudomonadati</taxon>
        <taxon>Pseudomonadota</taxon>
        <taxon>Gammaproteobacteria</taxon>
        <taxon>Lysobacterales</taxon>
        <taxon>Lysobacteraceae</taxon>
        <taxon>Xanthomonas</taxon>
    </lineage>
</organism>
<proteinExistence type="inferred from homology"/>
<comment type="similarity">
    <text evidence="1">Belongs to the bacterial ribosomal protein bS21 family.</text>
</comment>
<name>RS21_XANE5</name>
<dbReference type="EMBL" id="AM039952">
    <property type="protein sequence ID" value="CAJ25722.1"/>
    <property type="molecule type" value="Genomic_DNA"/>
</dbReference>
<dbReference type="RefSeq" id="WP_002808376.1">
    <property type="nucleotide sequence ID" value="NZ_CP017190.1"/>
</dbReference>
<dbReference type="SMR" id="Q3BNE1"/>
<dbReference type="STRING" id="456327.BJD11_02680"/>
<dbReference type="GeneID" id="97512051"/>
<dbReference type="KEGG" id="xcv:XCV3991"/>
<dbReference type="eggNOG" id="COG0828">
    <property type="taxonomic scope" value="Bacteria"/>
</dbReference>
<dbReference type="HOGENOM" id="CLU_159258_1_0_6"/>
<dbReference type="Proteomes" id="UP000007069">
    <property type="component" value="Chromosome"/>
</dbReference>
<dbReference type="GO" id="GO:1990904">
    <property type="term" value="C:ribonucleoprotein complex"/>
    <property type="evidence" value="ECO:0007669"/>
    <property type="project" value="UniProtKB-KW"/>
</dbReference>
<dbReference type="GO" id="GO:0005840">
    <property type="term" value="C:ribosome"/>
    <property type="evidence" value="ECO:0007669"/>
    <property type="project" value="UniProtKB-KW"/>
</dbReference>
<dbReference type="GO" id="GO:0003735">
    <property type="term" value="F:structural constituent of ribosome"/>
    <property type="evidence" value="ECO:0007669"/>
    <property type="project" value="InterPro"/>
</dbReference>
<dbReference type="GO" id="GO:0006412">
    <property type="term" value="P:translation"/>
    <property type="evidence" value="ECO:0007669"/>
    <property type="project" value="UniProtKB-UniRule"/>
</dbReference>
<dbReference type="Gene3D" id="1.20.5.1150">
    <property type="entry name" value="Ribosomal protein S8"/>
    <property type="match status" value="1"/>
</dbReference>
<dbReference type="HAMAP" id="MF_00358">
    <property type="entry name" value="Ribosomal_bS21"/>
    <property type="match status" value="1"/>
</dbReference>
<dbReference type="InterPro" id="IPR001911">
    <property type="entry name" value="Ribosomal_bS21"/>
</dbReference>
<dbReference type="InterPro" id="IPR018278">
    <property type="entry name" value="Ribosomal_bS21_CS"/>
</dbReference>
<dbReference type="InterPro" id="IPR038380">
    <property type="entry name" value="Ribosomal_bS21_sf"/>
</dbReference>
<dbReference type="NCBIfam" id="TIGR00030">
    <property type="entry name" value="S21p"/>
    <property type="match status" value="1"/>
</dbReference>
<dbReference type="PANTHER" id="PTHR21109">
    <property type="entry name" value="MITOCHONDRIAL 28S RIBOSOMAL PROTEIN S21"/>
    <property type="match status" value="1"/>
</dbReference>
<dbReference type="PANTHER" id="PTHR21109:SF22">
    <property type="entry name" value="SMALL RIBOSOMAL SUBUNIT PROTEIN BS21"/>
    <property type="match status" value="1"/>
</dbReference>
<dbReference type="Pfam" id="PF01165">
    <property type="entry name" value="Ribosomal_S21"/>
    <property type="match status" value="1"/>
</dbReference>
<dbReference type="PRINTS" id="PR00976">
    <property type="entry name" value="RIBOSOMALS21"/>
</dbReference>
<dbReference type="PROSITE" id="PS01181">
    <property type="entry name" value="RIBOSOMAL_S21"/>
    <property type="match status" value="1"/>
</dbReference>
<accession>Q3BNE1</accession>
<reference key="1">
    <citation type="journal article" date="2005" name="J. Bacteriol.">
        <title>Insights into genome plasticity and pathogenicity of the plant pathogenic Bacterium Xanthomonas campestris pv. vesicatoria revealed by the complete genome sequence.</title>
        <authorList>
            <person name="Thieme F."/>
            <person name="Koebnik R."/>
            <person name="Bekel T."/>
            <person name="Berger C."/>
            <person name="Boch J."/>
            <person name="Buettner D."/>
            <person name="Caldana C."/>
            <person name="Gaigalat L."/>
            <person name="Goesmann A."/>
            <person name="Kay S."/>
            <person name="Kirchner O."/>
            <person name="Lanz C."/>
            <person name="Linke B."/>
            <person name="McHardy A.C."/>
            <person name="Meyer F."/>
            <person name="Mittenhuber G."/>
            <person name="Nies D.H."/>
            <person name="Niesbach-Kloesgen U."/>
            <person name="Patschkowski T."/>
            <person name="Rueckert C."/>
            <person name="Rupp O."/>
            <person name="Schneiker S."/>
            <person name="Schuster S.C."/>
            <person name="Vorhoelter F.J."/>
            <person name="Weber E."/>
            <person name="Puehler A."/>
            <person name="Bonas U."/>
            <person name="Bartels D."/>
            <person name="Kaiser O."/>
        </authorList>
    </citation>
    <scope>NUCLEOTIDE SEQUENCE [LARGE SCALE GENOMIC DNA]</scope>
    <source>
        <strain>85-10</strain>
    </source>
</reference>
<evidence type="ECO:0000255" key="1">
    <source>
        <dbReference type="HAMAP-Rule" id="MF_00358"/>
    </source>
</evidence>
<evidence type="ECO:0000256" key="2">
    <source>
        <dbReference type="SAM" id="MobiDB-lite"/>
    </source>
</evidence>
<evidence type="ECO:0000305" key="3"/>
<protein>
    <recommendedName>
        <fullName evidence="1">Small ribosomal subunit protein bS21</fullName>
    </recommendedName>
    <alternativeName>
        <fullName evidence="3">30S ribosomal protein S21</fullName>
    </alternativeName>
</protein>